<feature type="chain" id="PRO_0000256097" description="ATP synthase subunit alpha">
    <location>
        <begin position="1"/>
        <end position="513"/>
    </location>
</feature>
<feature type="binding site" evidence="1">
    <location>
        <begin position="169"/>
        <end position="176"/>
    </location>
    <ligand>
        <name>ATP</name>
        <dbReference type="ChEBI" id="CHEBI:30616"/>
    </ligand>
</feature>
<feature type="site" description="Required for activity" evidence="1">
    <location>
        <position position="373"/>
    </location>
</feature>
<keyword id="KW-0066">ATP synthesis</keyword>
<keyword id="KW-0067">ATP-binding</keyword>
<keyword id="KW-0997">Cell inner membrane</keyword>
<keyword id="KW-1003">Cell membrane</keyword>
<keyword id="KW-0139">CF(1)</keyword>
<keyword id="KW-0375">Hydrogen ion transport</keyword>
<keyword id="KW-0406">Ion transport</keyword>
<keyword id="KW-0472">Membrane</keyword>
<keyword id="KW-0547">Nucleotide-binding</keyword>
<keyword id="KW-1185">Reference proteome</keyword>
<keyword id="KW-1278">Translocase</keyword>
<keyword id="KW-0813">Transport</keyword>
<evidence type="ECO:0000255" key="1">
    <source>
        <dbReference type="HAMAP-Rule" id="MF_01346"/>
    </source>
</evidence>
<name>ATPA_METFK</name>
<proteinExistence type="inferred from homology"/>
<protein>
    <recommendedName>
        <fullName evidence="1">ATP synthase subunit alpha</fullName>
        <ecNumber evidence="1">7.1.2.2</ecNumber>
    </recommendedName>
    <alternativeName>
        <fullName evidence="1">ATP synthase F1 sector subunit alpha</fullName>
    </alternativeName>
    <alternativeName>
        <fullName evidence="1">F-ATPase subunit alpha</fullName>
    </alternativeName>
</protein>
<accession>Q1GXM8</accession>
<comment type="function">
    <text evidence="1">Produces ATP from ADP in the presence of a proton gradient across the membrane. The alpha chain is a regulatory subunit.</text>
</comment>
<comment type="catalytic activity">
    <reaction evidence="1">
        <text>ATP + H2O + 4 H(+)(in) = ADP + phosphate + 5 H(+)(out)</text>
        <dbReference type="Rhea" id="RHEA:57720"/>
        <dbReference type="ChEBI" id="CHEBI:15377"/>
        <dbReference type="ChEBI" id="CHEBI:15378"/>
        <dbReference type="ChEBI" id="CHEBI:30616"/>
        <dbReference type="ChEBI" id="CHEBI:43474"/>
        <dbReference type="ChEBI" id="CHEBI:456216"/>
        <dbReference type="EC" id="7.1.2.2"/>
    </reaction>
</comment>
<comment type="subunit">
    <text evidence="1">F-type ATPases have 2 components, CF(1) - the catalytic core - and CF(0) - the membrane proton channel. CF(1) has five subunits: alpha(3), beta(3), gamma(1), delta(1), epsilon(1). CF(0) has three main subunits: a(1), b(2) and c(9-12). The alpha and beta chains form an alternating ring which encloses part of the gamma chain. CF(1) is attached to CF(0) by a central stalk formed by the gamma and epsilon chains, while a peripheral stalk is formed by the delta and b chains.</text>
</comment>
<comment type="subcellular location">
    <subcellularLocation>
        <location evidence="1">Cell inner membrane</location>
        <topology evidence="1">Peripheral membrane protein</topology>
    </subcellularLocation>
</comment>
<comment type="similarity">
    <text evidence="1">Belongs to the ATPase alpha/beta chains family.</text>
</comment>
<gene>
    <name evidence="1" type="primary">atpA</name>
    <name type="ordered locus">Mfla_2746</name>
</gene>
<sequence length="513" mass="55133">MQLSTSEISELIKSRLENFSTSAEARTQGTVISVTDGIVRIHGLSNVMAGEMIEFPGNVYGLALNLERDSVGAVILGDYENISEGDTVKCTGRILEVPVGPELVGRVVNALGQPIDGKGPINAKLTDKIEKVAPGVIARKSVSQPVQTGIKAIDSMVPVGRGQRELIIGDRQTGKTAVAVDAIINQKGQNMTCIYVAIGQKASTIANVVRKLEEHGAMEYTIVVAASASDPAALQFLAPYAGCTMGEYFRDRGQDALIVYDDLTKQAWAYRQISLLLRRPPGREAYPGDVFYIHSRLLERAARVNEEYVEKFTNGEVKGKTGSLTALPIIETAAGDVSAFVPTNVISITDGQIFLETDLFNAGIRPAINAGISVSRVGGAAQTKVIKKLGGGVRLALAQYRELAAFAQFASDLDEVTRKQLDRGRLVTELMKQAQYAPLSTSEMAVTLLAANKGFFDDVPVARALAFESALHSFLKSKYKSILDKIDSTNDLGGDDEKALEAAIQDFKATNAY</sequence>
<dbReference type="EC" id="7.1.2.2" evidence="1"/>
<dbReference type="EMBL" id="CP000284">
    <property type="protein sequence ID" value="ABE51009.1"/>
    <property type="molecule type" value="Genomic_DNA"/>
</dbReference>
<dbReference type="RefSeq" id="WP_011480962.1">
    <property type="nucleotide sequence ID" value="NC_007947.1"/>
</dbReference>
<dbReference type="SMR" id="Q1GXM8"/>
<dbReference type="STRING" id="265072.Mfla_2746"/>
<dbReference type="KEGG" id="mfa:Mfla_2746"/>
<dbReference type="eggNOG" id="COG0056">
    <property type="taxonomic scope" value="Bacteria"/>
</dbReference>
<dbReference type="HOGENOM" id="CLU_010091_2_1_4"/>
<dbReference type="OrthoDB" id="9803053at2"/>
<dbReference type="Proteomes" id="UP000002440">
    <property type="component" value="Chromosome"/>
</dbReference>
<dbReference type="GO" id="GO:0005886">
    <property type="term" value="C:plasma membrane"/>
    <property type="evidence" value="ECO:0007669"/>
    <property type="project" value="UniProtKB-SubCell"/>
</dbReference>
<dbReference type="GO" id="GO:0045259">
    <property type="term" value="C:proton-transporting ATP synthase complex"/>
    <property type="evidence" value="ECO:0007669"/>
    <property type="project" value="UniProtKB-KW"/>
</dbReference>
<dbReference type="GO" id="GO:0043531">
    <property type="term" value="F:ADP binding"/>
    <property type="evidence" value="ECO:0007669"/>
    <property type="project" value="TreeGrafter"/>
</dbReference>
<dbReference type="GO" id="GO:0005524">
    <property type="term" value="F:ATP binding"/>
    <property type="evidence" value="ECO:0007669"/>
    <property type="project" value="UniProtKB-UniRule"/>
</dbReference>
<dbReference type="GO" id="GO:0046933">
    <property type="term" value="F:proton-transporting ATP synthase activity, rotational mechanism"/>
    <property type="evidence" value="ECO:0007669"/>
    <property type="project" value="UniProtKB-UniRule"/>
</dbReference>
<dbReference type="CDD" id="cd18113">
    <property type="entry name" value="ATP-synt_F1_alpha_C"/>
    <property type="match status" value="1"/>
</dbReference>
<dbReference type="CDD" id="cd18116">
    <property type="entry name" value="ATP-synt_F1_alpha_N"/>
    <property type="match status" value="1"/>
</dbReference>
<dbReference type="CDD" id="cd01132">
    <property type="entry name" value="F1-ATPase_alpha_CD"/>
    <property type="match status" value="1"/>
</dbReference>
<dbReference type="FunFam" id="1.20.150.20:FF:000001">
    <property type="entry name" value="ATP synthase subunit alpha"/>
    <property type="match status" value="1"/>
</dbReference>
<dbReference type="FunFam" id="2.40.30.20:FF:000001">
    <property type="entry name" value="ATP synthase subunit alpha"/>
    <property type="match status" value="1"/>
</dbReference>
<dbReference type="FunFam" id="3.40.50.300:FF:000002">
    <property type="entry name" value="ATP synthase subunit alpha"/>
    <property type="match status" value="1"/>
</dbReference>
<dbReference type="Gene3D" id="2.40.30.20">
    <property type="match status" value="1"/>
</dbReference>
<dbReference type="Gene3D" id="1.20.150.20">
    <property type="entry name" value="ATP synthase alpha/beta chain, C-terminal domain"/>
    <property type="match status" value="1"/>
</dbReference>
<dbReference type="Gene3D" id="3.40.50.300">
    <property type="entry name" value="P-loop containing nucleotide triphosphate hydrolases"/>
    <property type="match status" value="1"/>
</dbReference>
<dbReference type="HAMAP" id="MF_01346">
    <property type="entry name" value="ATP_synth_alpha_bact"/>
    <property type="match status" value="1"/>
</dbReference>
<dbReference type="InterPro" id="IPR023366">
    <property type="entry name" value="ATP_synth_asu-like_sf"/>
</dbReference>
<dbReference type="InterPro" id="IPR000793">
    <property type="entry name" value="ATP_synth_asu_C"/>
</dbReference>
<dbReference type="InterPro" id="IPR038376">
    <property type="entry name" value="ATP_synth_asu_C_sf"/>
</dbReference>
<dbReference type="InterPro" id="IPR033732">
    <property type="entry name" value="ATP_synth_F1_a_nt-bd_dom"/>
</dbReference>
<dbReference type="InterPro" id="IPR005294">
    <property type="entry name" value="ATP_synth_F1_asu"/>
</dbReference>
<dbReference type="InterPro" id="IPR020003">
    <property type="entry name" value="ATPase_a/bsu_AS"/>
</dbReference>
<dbReference type="InterPro" id="IPR004100">
    <property type="entry name" value="ATPase_F1/V1/A1_a/bsu_N"/>
</dbReference>
<dbReference type="InterPro" id="IPR036121">
    <property type="entry name" value="ATPase_F1/V1/A1_a/bsu_N_sf"/>
</dbReference>
<dbReference type="InterPro" id="IPR000194">
    <property type="entry name" value="ATPase_F1/V1/A1_a/bsu_nucl-bd"/>
</dbReference>
<dbReference type="InterPro" id="IPR027417">
    <property type="entry name" value="P-loop_NTPase"/>
</dbReference>
<dbReference type="NCBIfam" id="TIGR00962">
    <property type="entry name" value="atpA"/>
    <property type="match status" value="1"/>
</dbReference>
<dbReference type="NCBIfam" id="NF009884">
    <property type="entry name" value="PRK13343.1"/>
    <property type="match status" value="1"/>
</dbReference>
<dbReference type="PANTHER" id="PTHR48082">
    <property type="entry name" value="ATP SYNTHASE SUBUNIT ALPHA, MITOCHONDRIAL"/>
    <property type="match status" value="1"/>
</dbReference>
<dbReference type="PANTHER" id="PTHR48082:SF2">
    <property type="entry name" value="ATP SYNTHASE SUBUNIT ALPHA, MITOCHONDRIAL"/>
    <property type="match status" value="1"/>
</dbReference>
<dbReference type="Pfam" id="PF00006">
    <property type="entry name" value="ATP-synt_ab"/>
    <property type="match status" value="1"/>
</dbReference>
<dbReference type="Pfam" id="PF00306">
    <property type="entry name" value="ATP-synt_ab_C"/>
    <property type="match status" value="1"/>
</dbReference>
<dbReference type="Pfam" id="PF02874">
    <property type="entry name" value="ATP-synt_ab_N"/>
    <property type="match status" value="1"/>
</dbReference>
<dbReference type="PIRSF" id="PIRSF039088">
    <property type="entry name" value="F_ATPase_subunit_alpha"/>
    <property type="match status" value="1"/>
</dbReference>
<dbReference type="SUPFAM" id="SSF47917">
    <property type="entry name" value="C-terminal domain of alpha and beta subunits of F1 ATP synthase"/>
    <property type="match status" value="1"/>
</dbReference>
<dbReference type="SUPFAM" id="SSF50615">
    <property type="entry name" value="N-terminal domain of alpha and beta subunits of F1 ATP synthase"/>
    <property type="match status" value="1"/>
</dbReference>
<dbReference type="SUPFAM" id="SSF52540">
    <property type="entry name" value="P-loop containing nucleoside triphosphate hydrolases"/>
    <property type="match status" value="1"/>
</dbReference>
<dbReference type="PROSITE" id="PS00152">
    <property type="entry name" value="ATPASE_ALPHA_BETA"/>
    <property type="match status" value="1"/>
</dbReference>
<organism>
    <name type="scientific">Methylobacillus flagellatus (strain ATCC 51484 / DSM 6875 / VKM B-1610 / KT)</name>
    <dbReference type="NCBI Taxonomy" id="265072"/>
    <lineage>
        <taxon>Bacteria</taxon>
        <taxon>Pseudomonadati</taxon>
        <taxon>Pseudomonadota</taxon>
        <taxon>Betaproteobacteria</taxon>
        <taxon>Nitrosomonadales</taxon>
        <taxon>Methylophilaceae</taxon>
        <taxon>Methylobacillus</taxon>
    </lineage>
</organism>
<reference key="1">
    <citation type="submission" date="2006-03" db="EMBL/GenBank/DDBJ databases">
        <title>Complete sequence of Methylobacillus flagellatus KT.</title>
        <authorList>
            <consortium name="US DOE Joint Genome Institute"/>
            <person name="Copeland A."/>
            <person name="Lucas S."/>
            <person name="Lapidus A."/>
            <person name="Barry K."/>
            <person name="Detter J.C."/>
            <person name="Glavina del Rio T."/>
            <person name="Hammon N."/>
            <person name="Israni S."/>
            <person name="Dalin E."/>
            <person name="Tice H."/>
            <person name="Pitluck S."/>
            <person name="Brettin T."/>
            <person name="Bruce D."/>
            <person name="Han C."/>
            <person name="Tapia R."/>
            <person name="Saunders E."/>
            <person name="Gilna P."/>
            <person name="Schmutz J."/>
            <person name="Larimer F."/>
            <person name="Land M."/>
            <person name="Kyrpides N."/>
            <person name="Anderson I."/>
            <person name="Richardson P."/>
        </authorList>
    </citation>
    <scope>NUCLEOTIDE SEQUENCE [LARGE SCALE GENOMIC DNA]</scope>
    <source>
        <strain>ATCC 51484 / DSM 6875 / VKM B-1610 / KT</strain>
    </source>
</reference>